<proteinExistence type="evidence at transcript level"/>
<comment type="function">
    <text evidence="1">Specific inhibitor of cysteine proteinases. Probably involved in the regulation of endogenous processes and in defense against pests and pathogens (By similarity).</text>
</comment>
<comment type="subcellular location">
    <subcellularLocation>
        <location evidence="3">Secreted</location>
    </subcellularLocation>
</comment>
<comment type="similarity">
    <text evidence="3">Belongs to the cystatin family. Phytocystatin subfamily.</text>
</comment>
<comment type="sequence caution" evidence="3">
    <conflict type="erroneous initiation">
        <sequence resource="EMBL-CDS" id="BAB17683"/>
    </conflict>
</comment>
<comment type="sequence caution" evidence="3">
    <conflict type="frameshift">
        <sequence resource="EMBL-CDS" id="CAA79016"/>
    </conflict>
</comment>
<feature type="signal peptide" evidence="2">
    <location>
        <begin position="1"/>
        <end position="22"/>
    </location>
</feature>
<feature type="chain" id="PRO_0000277495" description="Cysteine proteinase inhibitor 3">
    <location>
        <begin position="23"/>
        <end position="125"/>
    </location>
</feature>
<feature type="domain" description="Cystatin">
    <location>
        <begin position="36"/>
        <end position="124"/>
    </location>
</feature>
<feature type="short sequence motif" description="Secondary area of contact" evidence="1">
    <location>
        <begin position="80"/>
        <end position="84"/>
    </location>
</feature>
<feature type="site" description="Reactive site" evidence="1">
    <location>
        <position position="36"/>
    </location>
</feature>
<sequence length="125" mass="14422">MESKTFWIVTLLLCGTIQLAICRSEEKSTEKTMMLGGVHDLRGNQNSGEIESLARFAIQEHNKQQNKILEFKKIVKAREQVVAGTMYHLTLEAKEGDQTKNFEAKVWVKPWMNFKQLQEFKESSS</sequence>
<keyword id="KW-0611">Plant defense</keyword>
<keyword id="KW-0646">Protease inhibitor</keyword>
<keyword id="KW-1185">Reference proteome</keyword>
<keyword id="KW-0964">Secreted</keyword>
<keyword id="KW-0732">Signal</keyword>
<keyword id="KW-0789">Thiol protease inhibitor</keyword>
<dbReference type="EMBL" id="AC002409">
    <property type="protein sequence ID" value="AAB86448.1"/>
    <property type="molecule type" value="Genomic_DNA"/>
</dbReference>
<dbReference type="EMBL" id="CP002685">
    <property type="protein sequence ID" value="AEC09892.1"/>
    <property type="molecule type" value="Genomic_DNA"/>
</dbReference>
<dbReference type="EMBL" id="AY080692">
    <property type="protein sequence ID" value="AAL86314.1"/>
    <property type="molecule type" value="mRNA"/>
</dbReference>
<dbReference type="EMBL" id="AY150484">
    <property type="protein sequence ID" value="AAN13009.1"/>
    <property type="molecule type" value="mRNA"/>
</dbReference>
<dbReference type="EMBL" id="Z17618">
    <property type="protein sequence ID" value="CAA79016.1"/>
    <property type="status" value="ALT_FRAME"/>
    <property type="molecule type" value="mRNA"/>
</dbReference>
<dbReference type="EMBL" id="AY084769">
    <property type="protein sequence ID" value="AAM61337.1"/>
    <property type="molecule type" value="mRNA"/>
</dbReference>
<dbReference type="EMBL" id="AB044405">
    <property type="protein sequence ID" value="BAB17683.1"/>
    <property type="status" value="ALT_INIT"/>
    <property type="molecule type" value="mRNA"/>
</dbReference>
<dbReference type="PIR" id="T00752">
    <property type="entry name" value="T00752"/>
</dbReference>
<dbReference type="RefSeq" id="NP_181620.1">
    <property type="nucleotide sequence ID" value="NM_129651.4"/>
</dbReference>
<dbReference type="SMR" id="Q41906"/>
<dbReference type="BioGRID" id="4022">
    <property type="interactions" value="1"/>
</dbReference>
<dbReference type="FunCoup" id="Q41906">
    <property type="interactions" value="56"/>
</dbReference>
<dbReference type="IntAct" id="Q41906">
    <property type="interactions" value="1"/>
</dbReference>
<dbReference type="STRING" id="3702.Q41906"/>
<dbReference type="MEROPS" id="I25.014"/>
<dbReference type="PaxDb" id="3702-AT2G40880.1"/>
<dbReference type="ProteomicsDB" id="224659"/>
<dbReference type="EnsemblPlants" id="AT2G40880.1">
    <property type="protein sequence ID" value="AT2G40880.1"/>
    <property type="gene ID" value="AT2G40880"/>
</dbReference>
<dbReference type="GeneID" id="818685"/>
<dbReference type="Gramene" id="AT2G40880.1">
    <property type="protein sequence ID" value="AT2G40880.1"/>
    <property type="gene ID" value="AT2G40880"/>
</dbReference>
<dbReference type="KEGG" id="ath:AT2G40880"/>
<dbReference type="Araport" id="AT2G40880"/>
<dbReference type="TAIR" id="AT2G40880">
    <property type="gene designation" value="CYSA"/>
</dbReference>
<dbReference type="eggNOG" id="ENOG502SC50">
    <property type="taxonomic scope" value="Eukaryota"/>
</dbReference>
<dbReference type="HOGENOM" id="CLU_113093_1_1_1"/>
<dbReference type="InParanoid" id="Q41906"/>
<dbReference type="OMA" id="WHRICFR"/>
<dbReference type="OrthoDB" id="1908104at2759"/>
<dbReference type="PhylomeDB" id="Q41906"/>
<dbReference type="PRO" id="PR:Q41906"/>
<dbReference type="Proteomes" id="UP000006548">
    <property type="component" value="Chromosome 2"/>
</dbReference>
<dbReference type="ExpressionAtlas" id="Q41906">
    <property type="expression patterns" value="baseline and differential"/>
</dbReference>
<dbReference type="GO" id="GO:0005576">
    <property type="term" value="C:extracellular region"/>
    <property type="evidence" value="ECO:0007669"/>
    <property type="project" value="UniProtKB-SubCell"/>
</dbReference>
<dbReference type="GO" id="GO:0004869">
    <property type="term" value="F:cysteine-type endopeptidase inhibitor activity"/>
    <property type="evidence" value="ECO:0000314"/>
    <property type="project" value="TAIR"/>
</dbReference>
<dbReference type="GO" id="GO:0006952">
    <property type="term" value="P:defense response"/>
    <property type="evidence" value="ECO:0007669"/>
    <property type="project" value="UniProtKB-KW"/>
</dbReference>
<dbReference type="GO" id="GO:0006972">
    <property type="term" value="P:hyperosmotic response"/>
    <property type="evidence" value="ECO:0000315"/>
    <property type="project" value="TAIR"/>
</dbReference>
<dbReference type="GO" id="GO:0009409">
    <property type="term" value="P:response to cold"/>
    <property type="evidence" value="ECO:0000315"/>
    <property type="project" value="TAIR"/>
</dbReference>
<dbReference type="GO" id="GO:0006979">
    <property type="term" value="P:response to oxidative stress"/>
    <property type="evidence" value="ECO:0000315"/>
    <property type="project" value="TAIR"/>
</dbReference>
<dbReference type="GO" id="GO:0009414">
    <property type="term" value="P:response to water deprivation"/>
    <property type="evidence" value="ECO:0000315"/>
    <property type="project" value="TAIR"/>
</dbReference>
<dbReference type="CDD" id="cd00042">
    <property type="entry name" value="CY"/>
    <property type="match status" value="1"/>
</dbReference>
<dbReference type="FunFam" id="3.10.450.10:FF:000011">
    <property type="entry name" value="Cysteine proteinase inhibitor"/>
    <property type="match status" value="1"/>
</dbReference>
<dbReference type="Gene3D" id="3.10.450.10">
    <property type="match status" value="1"/>
</dbReference>
<dbReference type="InterPro" id="IPR027214">
    <property type="entry name" value="Cystatin"/>
</dbReference>
<dbReference type="InterPro" id="IPR000010">
    <property type="entry name" value="Cystatin_dom"/>
</dbReference>
<dbReference type="InterPro" id="IPR046350">
    <property type="entry name" value="Cystatin_sf"/>
</dbReference>
<dbReference type="InterPro" id="IPR018073">
    <property type="entry name" value="Prot_inh_cystat_CS"/>
</dbReference>
<dbReference type="PANTHER" id="PTHR11413">
    <property type="entry name" value="CYSTATIN FAMILY MEMBER"/>
    <property type="match status" value="1"/>
</dbReference>
<dbReference type="PANTHER" id="PTHR11413:SF107">
    <property type="entry name" value="CYSTEINE PROTEINASE INHIBITOR 3"/>
    <property type="match status" value="1"/>
</dbReference>
<dbReference type="Pfam" id="PF16845">
    <property type="entry name" value="SQAPI"/>
    <property type="match status" value="1"/>
</dbReference>
<dbReference type="SMART" id="SM00043">
    <property type="entry name" value="CY"/>
    <property type="match status" value="1"/>
</dbReference>
<dbReference type="SUPFAM" id="SSF54403">
    <property type="entry name" value="Cystatin/monellin"/>
    <property type="match status" value="1"/>
</dbReference>
<dbReference type="PROSITE" id="PS00287">
    <property type="entry name" value="CYSTATIN"/>
    <property type="match status" value="1"/>
</dbReference>
<gene>
    <name type="primary">CYS3</name>
    <name type="synonym">FL3-27</name>
    <name type="ordered locus">At2g40880</name>
    <name type="ORF">T20B5.8</name>
</gene>
<organism>
    <name type="scientific">Arabidopsis thaliana</name>
    <name type="common">Mouse-ear cress</name>
    <dbReference type="NCBI Taxonomy" id="3702"/>
    <lineage>
        <taxon>Eukaryota</taxon>
        <taxon>Viridiplantae</taxon>
        <taxon>Streptophyta</taxon>
        <taxon>Embryophyta</taxon>
        <taxon>Tracheophyta</taxon>
        <taxon>Spermatophyta</taxon>
        <taxon>Magnoliopsida</taxon>
        <taxon>eudicotyledons</taxon>
        <taxon>Gunneridae</taxon>
        <taxon>Pentapetalae</taxon>
        <taxon>rosids</taxon>
        <taxon>malvids</taxon>
        <taxon>Brassicales</taxon>
        <taxon>Brassicaceae</taxon>
        <taxon>Camelineae</taxon>
        <taxon>Arabidopsis</taxon>
    </lineage>
</organism>
<name>CYT3_ARATH</name>
<reference key="1">
    <citation type="journal article" date="1999" name="Nature">
        <title>Sequence and analysis of chromosome 2 of the plant Arabidopsis thaliana.</title>
        <authorList>
            <person name="Lin X."/>
            <person name="Kaul S."/>
            <person name="Rounsley S.D."/>
            <person name="Shea T.P."/>
            <person name="Benito M.-I."/>
            <person name="Town C.D."/>
            <person name="Fujii C.Y."/>
            <person name="Mason T.M."/>
            <person name="Bowman C.L."/>
            <person name="Barnstead M.E."/>
            <person name="Feldblyum T.V."/>
            <person name="Buell C.R."/>
            <person name="Ketchum K.A."/>
            <person name="Lee J.J."/>
            <person name="Ronning C.M."/>
            <person name="Koo H.L."/>
            <person name="Moffat K.S."/>
            <person name="Cronin L.A."/>
            <person name="Shen M."/>
            <person name="Pai G."/>
            <person name="Van Aken S."/>
            <person name="Umayam L."/>
            <person name="Tallon L.J."/>
            <person name="Gill J.E."/>
            <person name="Adams M.D."/>
            <person name="Carrera A.J."/>
            <person name="Creasy T.H."/>
            <person name="Goodman H.M."/>
            <person name="Somerville C.R."/>
            <person name="Copenhaver G.P."/>
            <person name="Preuss D."/>
            <person name="Nierman W.C."/>
            <person name="White O."/>
            <person name="Eisen J.A."/>
            <person name="Salzberg S.L."/>
            <person name="Fraser C.M."/>
            <person name="Venter J.C."/>
        </authorList>
    </citation>
    <scope>NUCLEOTIDE SEQUENCE [LARGE SCALE GENOMIC DNA]</scope>
    <source>
        <strain>cv. Columbia</strain>
    </source>
</reference>
<reference key="2">
    <citation type="journal article" date="2017" name="Plant J.">
        <title>Araport11: a complete reannotation of the Arabidopsis thaliana reference genome.</title>
        <authorList>
            <person name="Cheng C.Y."/>
            <person name="Krishnakumar V."/>
            <person name="Chan A.P."/>
            <person name="Thibaud-Nissen F."/>
            <person name="Schobel S."/>
            <person name="Town C.D."/>
        </authorList>
    </citation>
    <scope>GENOME REANNOTATION</scope>
    <source>
        <strain>cv. Columbia</strain>
    </source>
</reference>
<reference key="3">
    <citation type="journal article" date="2003" name="Science">
        <title>Empirical analysis of transcriptional activity in the Arabidopsis genome.</title>
        <authorList>
            <person name="Yamada K."/>
            <person name="Lim J."/>
            <person name="Dale J.M."/>
            <person name="Chen H."/>
            <person name="Shinn P."/>
            <person name="Palm C.J."/>
            <person name="Southwick A.M."/>
            <person name="Wu H.C."/>
            <person name="Kim C.J."/>
            <person name="Nguyen M."/>
            <person name="Pham P.K."/>
            <person name="Cheuk R.F."/>
            <person name="Karlin-Newmann G."/>
            <person name="Liu S.X."/>
            <person name="Lam B."/>
            <person name="Sakano H."/>
            <person name="Wu T."/>
            <person name="Yu G."/>
            <person name="Miranda M."/>
            <person name="Quach H.L."/>
            <person name="Tripp M."/>
            <person name="Chang C.H."/>
            <person name="Lee J.M."/>
            <person name="Toriumi M.J."/>
            <person name="Chan M.M."/>
            <person name="Tang C.C."/>
            <person name="Onodera C.S."/>
            <person name="Deng J.M."/>
            <person name="Akiyama K."/>
            <person name="Ansari Y."/>
            <person name="Arakawa T."/>
            <person name="Banh J."/>
            <person name="Banno F."/>
            <person name="Bowser L."/>
            <person name="Brooks S.Y."/>
            <person name="Carninci P."/>
            <person name="Chao Q."/>
            <person name="Choy N."/>
            <person name="Enju A."/>
            <person name="Goldsmith A.D."/>
            <person name="Gurjal M."/>
            <person name="Hansen N.F."/>
            <person name="Hayashizaki Y."/>
            <person name="Johnson-Hopson C."/>
            <person name="Hsuan V.W."/>
            <person name="Iida K."/>
            <person name="Karnes M."/>
            <person name="Khan S."/>
            <person name="Koesema E."/>
            <person name="Ishida J."/>
            <person name="Jiang P.X."/>
            <person name="Jones T."/>
            <person name="Kawai J."/>
            <person name="Kamiya A."/>
            <person name="Meyers C."/>
            <person name="Nakajima M."/>
            <person name="Narusaka M."/>
            <person name="Seki M."/>
            <person name="Sakurai T."/>
            <person name="Satou M."/>
            <person name="Tamse R."/>
            <person name="Vaysberg M."/>
            <person name="Wallender E.K."/>
            <person name="Wong C."/>
            <person name="Yamamura Y."/>
            <person name="Yuan S."/>
            <person name="Shinozaki K."/>
            <person name="Davis R.W."/>
            <person name="Theologis A."/>
            <person name="Ecker J.R."/>
        </authorList>
    </citation>
    <scope>NUCLEOTIDE SEQUENCE [LARGE SCALE MRNA]</scope>
    <source>
        <strain>cv. Columbia</strain>
    </source>
</reference>
<reference key="4">
    <citation type="journal article" date="1993" name="Plant J.">
        <title>An inventory of 1152 expressed sequence tags obtained by partial sequencing of cDNAs from Arabidopsis thaliana.</title>
        <authorList>
            <person name="Hoefte H."/>
            <person name="Desprez T."/>
            <person name="Amselem J."/>
            <person name="Chiapello H."/>
            <person name="Rouze P."/>
            <person name="Caboche M."/>
            <person name="Moisan A."/>
            <person name="Jourjon M.-F."/>
            <person name="Charpenteau J.-L."/>
            <person name="Berthomieu P."/>
            <person name="Guerrier D."/>
            <person name="Giraudat J."/>
            <person name="Quigley F."/>
            <person name="Thomas F."/>
            <person name="Yu D.-Y."/>
            <person name="Mache R."/>
            <person name="Raynal M."/>
            <person name="Cooke R."/>
            <person name="Grellet F."/>
            <person name="Delseny M."/>
            <person name="Parmentier Y."/>
            <person name="de Marcillac G."/>
            <person name="Gigot C."/>
            <person name="Fleck J."/>
            <person name="Philipps G."/>
            <person name="Axelos M."/>
            <person name="Bardet C."/>
            <person name="Tremousaygue D."/>
            <person name="Lescure B."/>
        </authorList>
    </citation>
    <scope>NUCLEOTIDE SEQUENCE [LARGE SCALE MRNA]</scope>
    <source>
        <strain>cv. Columbia</strain>
    </source>
</reference>
<reference key="5">
    <citation type="submission" date="2002-03" db="EMBL/GenBank/DDBJ databases">
        <title>Full-length cDNA from Arabidopsis thaliana.</title>
        <authorList>
            <person name="Brover V.V."/>
            <person name="Troukhan M.E."/>
            <person name="Alexandrov N.A."/>
            <person name="Lu Y.-P."/>
            <person name="Flavell R.B."/>
            <person name="Feldmann K.A."/>
        </authorList>
    </citation>
    <scope>NUCLEOTIDE SEQUENCE [LARGE SCALE MRNA]</scope>
</reference>
<reference key="6">
    <citation type="journal article" date="2001" name="Plant Cell">
        <title>Monitoring the expression pattern of 1300 Arabidopsis genes under drought and cold stresses by using a full-length cDNA microarray.</title>
        <authorList>
            <person name="Seki M."/>
            <person name="Narusaka M."/>
            <person name="Abe H."/>
            <person name="Kasuga M."/>
            <person name="Yamaguchi-Shinozaki K."/>
            <person name="Carninci P."/>
            <person name="Hayashizaki Y."/>
            <person name="Shinozaki K."/>
        </authorList>
    </citation>
    <scope>NUCLEOTIDE SEQUENCE [MRNA] OF 10-125</scope>
</reference>
<reference key="7">
    <citation type="journal article" date="2005" name="Mol. Genet. Genomics">
        <title>Comparative phylogenetic analysis of cystatin gene families from arabidopsis, rice and barley.</title>
        <authorList>
            <person name="Martinez M."/>
            <person name="Abraham Z."/>
            <person name="Carbonero P."/>
            <person name="Diaz I."/>
        </authorList>
    </citation>
    <scope>GENE FAMILY</scope>
</reference>
<evidence type="ECO:0000250" key="1"/>
<evidence type="ECO:0000255" key="2"/>
<evidence type="ECO:0000305" key="3"/>
<protein>
    <recommendedName>
        <fullName>Cysteine proteinase inhibitor 3</fullName>
        <shortName>AtCYS-3</shortName>
    </recommendedName>
</protein>
<accession>Q41906</accession>
<accession>O22202</accession>
<accession>Q8RXS7</accession>
<accession>Q9FXN6</accession>